<sequence length="285" mass="29780">MSEHNVYGAAQPAQPAQPAQPRTRIRTHHLQKMKAEGHKWAMLTAYDYSTARIFDEAGIPVLLVGDSAANVVYGYDTTVPVSIDELIPLVRGVVRGAPHALVVADLPFGSYEAGPAAALAAATRFMKEGGAHAVKLEGGERVAEQIAHLTAAGIPVMAHIGFTPQSVNSLGGFRVQGRGDAAEQTIADAIAVAEAGAFSVVMEMVPAGLATQITGKLTIPTIGIGAGPNCDGQVLVWQDMAGMSSGKSARFVKRFADIGGELRRAATQYAHEVAAGVFPADEHCF</sequence>
<dbReference type="EC" id="2.1.2.11" evidence="1"/>
<dbReference type="EMBL" id="CP000479">
    <property type="protein sequence ID" value="ABK68047.1"/>
    <property type="molecule type" value="Genomic_DNA"/>
</dbReference>
<dbReference type="RefSeq" id="WP_011724674.1">
    <property type="nucleotide sequence ID" value="NC_008595.1"/>
</dbReference>
<dbReference type="SMR" id="A0QEV5"/>
<dbReference type="KEGG" id="mav:MAV_2239"/>
<dbReference type="HOGENOM" id="CLU_036645_1_0_11"/>
<dbReference type="UniPathway" id="UPA00028">
    <property type="reaction ID" value="UER00003"/>
</dbReference>
<dbReference type="Proteomes" id="UP000001574">
    <property type="component" value="Chromosome"/>
</dbReference>
<dbReference type="GO" id="GO:0005737">
    <property type="term" value="C:cytoplasm"/>
    <property type="evidence" value="ECO:0007669"/>
    <property type="project" value="UniProtKB-SubCell"/>
</dbReference>
<dbReference type="GO" id="GO:0003864">
    <property type="term" value="F:3-methyl-2-oxobutanoate hydroxymethyltransferase activity"/>
    <property type="evidence" value="ECO:0007669"/>
    <property type="project" value="UniProtKB-UniRule"/>
</dbReference>
<dbReference type="GO" id="GO:0000287">
    <property type="term" value="F:magnesium ion binding"/>
    <property type="evidence" value="ECO:0007669"/>
    <property type="project" value="TreeGrafter"/>
</dbReference>
<dbReference type="GO" id="GO:0015940">
    <property type="term" value="P:pantothenate biosynthetic process"/>
    <property type="evidence" value="ECO:0007669"/>
    <property type="project" value="UniProtKB-UniRule"/>
</dbReference>
<dbReference type="CDD" id="cd06557">
    <property type="entry name" value="KPHMT-like"/>
    <property type="match status" value="1"/>
</dbReference>
<dbReference type="FunFam" id="3.20.20.60:FF:000003">
    <property type="entry name" value="3-methyl-2-oxobutanoate hydroxymethyltransferase"/>
    <property type="match status" value="1"/>
</dbReference>
<dbReference type="Gene3D" id="3.20.20.60">
    <property type="entry name" value="Phosphoenolpyruvate-binding domains"/>
    <property type="match status" value="1"/>
</dbReference>
<dbReference type="HAMAP" id="MF_00156">
    <property type="entry name" value="PanB"/>
    <property type="match status" value="1"/>
</dbReference>
<dbReference type="InterPro" id="IPR003700">
    <property type="entry name" value="Pantoate_hydroxy_MeTrfase"/>
</dbReference>
<dbReference type="InterPro" id="IPR015813">
    <property type="entry name" value="Pyrv/PenolPyrv_kinase-like_dom"/>
</dbReference>
<dbReference type="InterPro" id="IPR040442">
    <property type="entry name" value="Pyrv_kinase-like_dom_sf"/>
</dbReference>
<dbReference type="NCBIfam" id="TIGR00222">
    <property type="entry name" value="panB"/>
    <property type="match status" value="1"/>
</dbReference>
<dbReference type="NCBIfam" id="NF001452">
    <property type="entry name" value="PRK00311.1"/>
    <property type="match status" value="1"/>
</dbReference>
<dbReference type="PANTHER" id="PTHR20881">
    <property type="entry name" value="3-METHYL-2-OXOBUTANOATE HYDROXYMETHYLTRANSFERASE"/>
    <property type="match status" value="1"/>
</dbReference>
<dbReference type="PANTHER" id="PTHR20881:SF0">
    <property type="entry name" value="3-METHYL-2-OXOBUTANOATE HYDROXYMETHYLTRANSFERASE"/>
    <property type="match status" value="1"/>
</dbReference>
<dbReference type="Pfam" id="PF02548">
    <property type="entry name" value="Pantoate_transf"/>
    <property type="match status" value="1"/>
</dbReference>
<dbReference type="PIRSF" id="PIRSF000388">
    <property type="entry name" value="Pantoate_hydroxy_MeTrfase"/>
    <property type="match status" value="1"/>
</dbReference>
<dbReference type="SUPFAM" id="SSF51621">
    <property type="entry name" value="Phosphoenolpyruvate/pyruvate domain"/>
    <property type="match status" value="1"/>
</dbReference>
<accession>A0QEV5</accession>
<evidence type="ECO:0000255" key="1">
    <source>
        <dbReference type="HAMAP-Rule" id="MF_00156"/>
    </source>
</evidence>
<evidence type="ECO:0000256" key="2">
    <source>
        <dbReference type="SAM" id="MobiDB-lite"/>
    </source>
</evidence>
<proteinExistence type="inferred from homology"/>
<comment type="function">
    <text evidence="1">Catalyzes the reversible reaction in which hydroxymethyl group from 5,10-methylenetetrahydrofolate is transferred onto alpha-ketoisovalerate to form ketopantoate.</text>
</comment>
<comment type="catalytic activity">
    <reaction evidence="1">
        <text>3-methyl-2-oxobutanoate + (6R)-5,10-methylene-5,6,7,8-tetrahydrofolate + H2O = 2-dehydropantoate + (6S)-5,6,7,8-tetrahydrofolate</text>
        <dbReference type="Rhea" id="RHEA:11824"/>
        <dbReference type="ChEBI" id="CHEBI:11561"/>
        <dbReference type="ChEBI" id="CHEBI:11851"/>
        <dbReference type="ChEBI" id="CHEBI:15377"/>
        <dbReference type="ChEBI" id="CHEBI:15636"/>
        <dbReference type="ChEBI" id="CHEBI:57453"/>
        <dbReference type="EC" id="2.1.2.11"/>
    </reaction>
</comment>
<comment type="cofactor">
    <cofactor evidence="1">
        <name>Mg(2+)</name>
        <dbReference type="ChEBI" id="CHEBI:18420"/>
    </cofactor>
    <text evidence="1">Binds 1 Mg(2+) ion per subunit.</text>
</comment>
<comment type="pathway">
    <text evidence="1">Cofactor biosynthesis; (R)-pantothenate biosynthesis; (R)-pantoate from 3-methyl-2-oxobutanoate: step 1/2.</text>
</comment>
<comment type="subunit">
    <text evidence="1">Homodecamer; pentamer of dimers.</text>
</comment>
<comment type="subcellular location">
    <subcellularLocation>
        <location evidence="1">Cytoplasm</location>
    </subcellularLocation>
</comment>
<comment type="similarity">
    <text evidence="1">Belongs to the PanB family.</text>
</comment>
<gene>
    <name evidence="1" type="primary">panB</name>
    <name type="ordered locus">MAV_2239</name>
</gene>
<name>PANB_MYCA1</name>
<keyword id="KW-0963">Cytoplasm</keyword>
<keyword id="KW-0460">Magnesium</keyword>
<keyword id="KW-0479">Metal-binding</keyword>
<keyword id="KW-0566">Pantothenate biosynthesis</keyword>
<keyword id="KW-0808">Transferase</keyword>
<organism>
    <name type="scientific">Mycobacterium avium (strain 104)</name>
    <dbReference type="NCBI Taxonomy" id="243243"/>
    <lineage>
        <taxon>Bacteria</taxon>
        <taxon>Bacillati</taxon>
        <taxon>Actinomycetota</taxon>
        <taxon>Actinomycetes</taxon>
        <taxon>Mycobacteriales</taxon>
        <taxon>Mycobacteriaceae</taxon>
        <taxon>Mycobacterium</taxon>
        <taxon>Mycobacterium avium complex (MAC)</taxon>
    </lineage>
</organism>
<reference key="1">
    <citation type="submission" date="2006-10" db="EMBL/GenBank/DDBJ databases">
        <authorList>
            <person name="Fleischmann R.D."/>
            <person name="Dodson R.J."/>
            <person name="Haft D.H."/>
            <person name="Merkel J.S."/>
            <person name="Nelson W.C."/>
            <person name="Fraser C.M."/>
        </authorList>
    </citation>
    <scope>NUCLEOTIDE SEQUENCE [LARGE SCALE GENOMIC DNA]</scope>
    <source>
        <strain>104</strain>
    </source>
</reference>
<feature type="chain" id="PRO_0000297299" description="3-methyl-2-oxobutanoate hydroxymethyltransferase">
    <location>
        <begin position="1"/>
        <end position="285"/>
    </location>
</feature>
<feature type="region of interest" description="Disordered" evidence="2">
    <location>
        <begin position="1"/>
        <end position="23"/>
    </location>
</feature>
<feature type="compositionally biased region" description="Low complexity" evidence="2">
    <location>
        <begin position="9"/>
        <end position="21"/>
    </location>
</feature>
<feature type="active site" description="Proton acceptor" evidence="1">
    <location>
        <position position="203"/>
    </location>
</feature>
<feature type="binding site" evidence="1">
    <location>
        <begin position="66"/>
        <end position="67"/>
    </location>
    <ligand>
        <name>3-methyl-2-oxobutanoate</name>
        <dbReference type="ChEBI" id="CHEBI:11851"/>
    </ligand>
</feature>
<feature type="binding site" evidence="1">
    <location>
        <position position="66"/>
    </location>
    <ligand>
        <name>Mg(2+)</name>
        <dbReference type="ChEBI" id="CHEBI:18420"/>
    </ligand>
</feature>
<feature type="binding site" evidence="1">
    <location>
        <position position="105"/>
    </location>
    <ligand>
        <name>3-methyl-2-oxobutanoate</name>
        <dbReference type="ChEBI" id="CHEBI:11851"/>
    </ligand>
</feature>
<feature type="binding site" evidence="1">
    <location>
        <position position="105"/>
    </location>
    <ligand>
        <name>Mg(2+)</name>
        <dbReference type="ChEBI" id="CHEBI:18420"/>
    </ligand>
</feature>
<feature type="binding site" evidence="1">
    <location>
        <position position="135"/>
    </location>
    <ligand>
        <name>3-methyl-2-oxobutanoate</name>
        <dbReference type="ChEBI" id="CHEBI:11851"/>
    </ligand>
</feature>
<feature type="binding site" evidence="1">
    <location>
        <position position="137"/>
    </location>
    <ligand>
        <name>Mg(2+)</name>
        <dbReference type="ChEBI" id="CHEBI:18420"/>
    </ligand>
</feature>
<protein>
    <recommendedName>
        <fullName evidence="1">3-methyl-2-oxobutanoate hydroxymethyltransferase</fullName>
        <ecNumber evidence="1">2.1.2.11</ecNumber>
    </recommendedName>
    <alternativeName>
        <fullName evidence="1">Ketopantoate hydroxymethyltransferase</fullName>
        <shortName evidence="1">KPHMT</shortName>
    </alternativeName>
</protein>